<organism>
    <name type="scientific">Methylorubrum extorquens (strain CM4 / NCIMB 13688)</name>
    <name type="common">Methylobacterium extorquens</name>
    <dbReference type="NCBI Taxonomy" id="440085"/>
    <lineage>
        <taxon>Bacteria</taxon>
        <taxon>Pseudomonadati</taxon>
        <taxon>Pseudomonadota</taxon>
        <taxon>Alphaproteobacteria</taxon>
        <taxon>Hyphomicrobiales</taxon>
        <taxon>Methylobacteriaceae</taxon>
        <taxon>Methylorubrum</taxon>
    </lineage>
</organism>
<proteinExistence type="inferred from homology"/>
<name>DAPF_METC4</name>
<evidence type="ECO:0000255" key="1">
    <source>
        <dbReference type="HAMAP-Rule" id="MF_00197"/>
    </source>
</evidence>
<sequence>MSPLANRRFLKMHGAGNAIVVLDLRGTAVRVTPAEARAIAADVHSRFDQLMVVHDPVTPGTDAFMRIYNTDGSESGACGNGTRCVGYALLDDPAMARPAENGALTLETKAGLVAVKRITERSFTVDMGQPRLRWDEIPLTEPFLDTRRIELQVGPIDDPILHSPAAVSMGNPHAIFFVERDPDSYDLGRIGPLLEAHPIFPERANISIAEVTSRDTIKLRVWERGAGLTLACGTAACATVVAASRLRMIGRAARVALPGGELSIEWRADDHVLMTGPVYLEGEGTFSPDLFAGIDG</sequence>
<keyword id="KW-0028">Amino-acid biosynthesis</keyword>
<keyword id="KW-0963">Cytoplasm</keyword>
<keyword id="KW-0413">Isomerase</keyword>
<keyword id="KW-0457">Lysine biosynthesis</keyword>
<protein>
    <recommendedName>
        <fullName evidence="1">Diaminopimelate epimerase</fullName>
        <shortName evidence="1">DAP epimerase</shortName>
        <ecNumber evidence="1">5.1.1.7</ecNumber>
    </recommendedName>
    <alternativeName>
        <fullName evidence="1">PLP-independent amino acid racemase</fullName>
    </alternativeName>
</protein>
<reference key="1">
    <citation type="submission" date="2008-12" db="EMBL/GenBank/DDBJ databases">
        <title>Complete sequence of chromosome of Methylobacterium chloromethanicum CM4.</title>
        <authorList>
            <consortium name="US DOE Joint Genome Institute"/>
            <person name="Lucas S."/>
            <person name="Copeland A."/>
            <person name="Lapidus A."/>
            <person name="Glavina del Rio T."/>
            <person name="Dalin E."/>
            <person name="Tice H."/>
            <person name="Bruce D."/>
            <person name="Goodwin L."/>
            <person name="Pitluck S."/>
            <person name="Chertkov O."/>
            <person name="Brettin T."/>
            <person name="Detter J.C."/>
            <person name="Han C."/>
            <person name="Larimer F."/>
            <person name="Land M."/>
            <person name="Hauser L."/>
            <person name="Kyrpides N."/>
            <person name="Mikhailova N."/>
            <person name="Marx C."/>
            <person name="Richardson P."/>
        </authorList>
    </citation>
    <scope>NUCLEOTIDE SEQUENCE [LARGE SCALE GENOMIC DNA]</scope>
    <source>
        <strain>CM4 / NCIMB 13688</strain>
    </source>
</reference>
<dbReference type="EC" id="5.1.1.7" evidence="1"/>
<dbReference type="EMBL" id="CP001298">
    <property type="protein sequence ID" value="ACK83786.1"/>
    <property type="molecule type" value="Genomic_DNA"/>
</dbReference>
<dbReference type="RefSeq" id="WP_015951208.1">
    <property type="nucleotide sequence ID" value="NC_011757.1"/>
</dbReference>
<dbReference type="SMR" id="B7KQM2"/>
<dbReference type="KEGG" id="mch:Mchl_2947"/>
<dbReference type="HOGENOM" id="CLU_053306_1_0_5"/>
<dbReference type="UniPathway" id="UPA00034">
    <property type="reaction ID" value="UER00025"/>
</dbReference>
<dbReference type="Proteomes" id="UP000002385">
    <property type="component" value="Chromosome"/>
</dbReference>
<dbReference type="GO" id="GO:0005829">
    <property type="term" value="C:cytosol"/>
    <property type="evidence" value="ECO:0007669"/>
    <property type="project" value="TreeGrafter"/>
</dbReference>
<dbReference type="GO" id="GO:0008837">
    <property type="term" value="F:diaminopimelate epimerase activity"/>
    <property type="evidence" value="ECO:0007669"/>
    <property type="project" value="UniProtKB-UniRule"/>
</dbReference>
<dbReference type="GO" id="GO:0009089">
    <property type="term" value="P:lysine biosynthetic process via diaminopimelate"/>
    <property type="evidence" value="ECO:0007669"/>
    <property type="project" value="UniProtKB-UniRule"/>
</dbReference>
<dbReference type="Gene3D" id="3.10.310.10">
    <property type="entry name" value="Diaminopimelate Epimerase, Chain A, domain 1"/>
    <property type="match status" value="2"/>
</dbReference>
<dbReference type="HAMAP" id="MF_00197">
    <property type="entry name" value="DAP_epimerase"/>
    <property type="match status" value="1"/>
</dbReference>
<dbReference type="InterPro" id="IPR018510">
    <property type="entry name" value="DAP_epimerase_AS"/>
</dbReference>
<dbReference type="InterPro" id="IPR001653">
    <property type="entry name" value="DAP_epimerase_DapF"/>
</dbReference>
<dbReference type="NCBIfam" id="TIGR00652">
    <property type="entry name" value="DapF"/>
    <property type="match status" value="1"/>
</dbReference>
<dbReference type="PANTHER" id="PTHR31689:SF0">
    <property type="entry name" value="DIAMINOPIMELATE EPIMERASE"/>
    <property type="match status" value="1"/>
</dbReference>
<dbReference type="PANTHER" id="PTHR31689">
    <property type="entry name" value="DIAMINOPIMELATE EPIMERASE, CHLOROPLASTIC"/>
    <property type="match status" value="1"/>
</dbReference>
<dbReference type="Pfam" id="PF01678">
    <property type="entry name" value="DAP_epimerase"/>
    <property type="match status" value="2"/>
</dbReference>
<dbReference type="SUPFAM" id="SSF54506">
    <property type="entry name" value="Diaminopimelate epimerase-like"/>
    <property type="match status" value="2"/>
</dbReference>
<dbReference type="PROSITE" id="PS01326">
    <property type="entry name" value="DAP_EPIMERASE"/>
    <property type="match status" value="1"/>
</dbReference>
<accession>B7KQM2</accession>
<gene>
    <name evidence="1" type="primary">dapF</name>
    <name type="ordered locus">Mchl_2947</name>
</gene>
<feature type="chain" id="PRO_1000124420" description="Diaminopimelate epimerase">
    <location>
        <begin position="1"/>
        <end position="296"/>
    </location>
</feature>
<feature type="active site" description="Proton donor" evidence="1">
    <location>
        <position position="78"/>
    </location>
</feature>
<feature type="active site" description="Proton acceptor" evidence="1">
    <location>
        <position position="232"/>
    </location>
</feature>
<feature type="binding site" evidence="1">
    <location>
        <position position="17"/>
    </location>
    <ligand>
        <name>substrate</name>
    </ligand>
</feature>
<feature type="binding site" evidence="1">
    <location>
        <position position="49"/>
    </location>
    <ligand>
        <name>substrate</name>
    </ligand>
</feature>
<feature type="binding site" evidence="1">
    <location>
        <position position="69"/>
    </location>
    <ligand>
        <name>substrate</name>
    </ligand>
</feature>
<feature type="binding site" evidence="1">
    <location>
        <begin position="79"/>
        <end position="80"/>
    </location>
    <ligand>
        <name>substrate</name>
    </ligand>
</feature>
<feature type="binding site" evidence="1">
    <location>
        <position position="171"/>
    </location>
    <ligand>
        <name>substrate</name>
    </ligand>
</feature>
<feature type="binding site" evidence="1">
    <location>
        <position position="205"/>
    </location>
    <ligand>
        <name>substrate</name>
    </ligand>
</feature>
<feature type="binding site" evidence="1">
    <location>
        <begin position="223"/>
        <end position="224"/>
    </location>
    <ligand>
        <name>substrate</name>
    </ligand>
</feature>
<feature type="binding site" evidence="1">
    <location>
        <begin position="233"/>
        <end position="234"/>
    </location>
    <ligand>
        <name>substrate</name>
    </ligand>
</feature>
<feature type="site" description="Could be important to modulate the pK values of the two catalytic cysteine residues" evidence="1">
    <location>
        <position position="173"/>
    </location>
</feature>
<feature type="site" description="Could be important to modulate the pK values of the two catalytic cysteine residues" evidence="1">
    <location>
        <position position="223"/>
    </location>
</feature>
<comment type="function">
    <text evidence="1">Catalyzes the stereoinversion of LL-2,6-diaminopimelate (L,L-DAP) to meso-diaminopimelate (meso-DAP), a precursor of L-lysine and an essential component of the bacterial peptidoglycan.</text>
</comment>
<comment type="catalytic activity">
    <reaction evidence="1">
        <text>(2S,6S)-2,6-diaminopimelate = meso-2,6-diaminopimelate</text>
        <dbReference type="Rhea" id="RHEA:15393"/>
        <dbReference type="ChEBI" id="CHEBI:57609"/>
        <dbReference type="ChEBI" id="CHEBI:57791"/>
        <dbReference type="EC" id="5.1.1.7"/>
    </reaction>
</comment>
<comment type="pathway">
    <text evidence="1">Amino-acid biosynthesis; L-lysine biosynthesis via DAP pathway; DL-2,6-diaminopimelate from LL-2,6-diaminopimelate: step 1/1.</text>
</comment>
<comment type="subunit">
    <text evidence="1">Homodimer.</text>
</comment>
<comment type="subcellular location">
    <subcellularLocation>
        <location evidence="1">Cytoplasm</location>
    </subcellularLocation>
</comment>
<comment type="similarity">
    <text evidence="1">Belongs to the diaminopimelate epimerase family.</text>
</comment>